<comment type="function">
    <text evidence="1">Transcriptional activator that increases RNA Pol II processivity, thereby increasing the level of full-length viral transcripts. Recognizes a hairpin structure at the 5'-LTR of the nascent viral mRNAs referred to as the transactivation responsive RNA element (TAR) and recruits the cyclin T1-CDK9 complex (P-TEFb complex) that will in turn hyperphosphorylate the RNA polymerase II to allow efficient elongation. The CDK9 component of P-TEFb and other Tat-activated kinases hyperphosphorylate the C-terminus of RNA Pol II that becomes stabilized and much more processive. Other factors such as HTATSF1/Tat-SF1, SUPT5H/SPT5, and HTATIP2 are also important for Tat's function. Besides its effect on RNA Pol II processivity, Tat induces chromatin remodeling of proviral genes by recruiting the histone acetyltransferases (HATs) CREBBP, EP300 and PCAF to the chromatin. This also contributes to the increase in proviral transcription rate, especially when the provirus integrates in transcriptionally silent region of the host genome. To ensure maximal activation of the LTR, Tat mediates nuclear translocation of NF-kappa-B by interacting with host RELA. Through its interaction with host TBP, Tat may also modulate transcription initiation. Tat can reactivate a latently infected cell by penetrating in it and transactivating its LTR promoter. In the cytoplasm, Tat is thought to act as a translational activator of HIV-1 mRNAs.</text>
</comment>
<comment type="function">
    <text evidence="1">Extracellular circulating Tat can be endocytosed by surrounding uninfected cells via the binding to several surface receptors such as CD26, CXCR4, heparan sulfate proteoglycans (HSPG) or LDLR. Neurons are rarely infected, but they internalize Tat via their LDLR. Through its interaction with nuclear HATs, Tat is potentially able to control the acetylation-dependent cellular gene expression. Modulates the expression of many cellular genes involved in cell survival, proliferation or in coding for cytokines or cytokine receptors. Tat plays a role in T-cell and neurons apoptosis. Tat induced neurotoxicity and apoptosis probably contribute to neuroAIDS. Circulating Tat also acts as a chemokine-like and/or growth factor-like molecule that binds to specific receptors on the surface of the cells, affecting many cellular pathways. In the vascular system, Tat binds to ITGAV/ITGB3 and ITGA5/ITGB1 integrins dimers at the surface of endothelial cells and competes with bFGF for heparin-binding sites, leading to an excess of soluble bFGF.</text>
</comment>
<comment type="subunit">
    <text evidence="1">Interacts with host CCNT1. Associates with the P-TEFb complex composed at least of Tat, P-TEFb (CDK9 and CCNT1), TAR RNA, RNA Pol II. Recruits the HATs CREBBP, TAF1/TFIID, EP300, PCAF and GCN5L2. Interacts with host KAT5/Tip60; this interaction targets the latter to degradation. Interacts with the host deacetylase SIRT1. Interacts with host capping enzyme RNGTT; this interaction stimulates RNGTT. Binds to host KDR, and to the host integrins ITGAV/ITGB3 and ITGA5/ITGB1. Interacts with host KPNB1/importin beta-1 without previous binding to KPNA1/importin alpha-1. Interacts with EIF2AK2. Interacts with host nucleosome assembly protein NAP1L1; this interaction may be required for the transport of Tat within the nucleus, since the two proteins interact at the nuclear rim. Interacts with host C1QBP/SF2P32; this interaction involves lysine-acetylated Tat. Interacts with the host chemokine receptors CCR2, CCR3 and CXCR4. Interacts with host DPP4/CD26; this interaction may trigger an anti-proliferative effect. Interacts with host LDLR. Interacts with the host extracellular matrix metalloproteinase MMP1. Interacts with host PRMT6; this interaction mediates Tat's methylation. Interacts with, and is ubiquitinated by MDM2/Hdm2. Interacts with host PSMC3 and HTATIP2. Interacts with STAB1; this interaction may overcome SATB1-mediated repression of IL2 and IL2RA (interleukin) in T cells by binding to the same domain than HDAC1. Interacts (when acetylated) with human CDK13, thereby increasing HIV-1 mRNA splicing and promoting the production of the doubly spliced HIV-1 protein Nef. Interacts with host TBP; this interaction modulates the activity of transcriptional pre-initiation complex. Interacts with host RELA. Interacts with host PLSCR1; this interaction negatively regulates Tat transactivation activity by altering its subcellular distribution.</text>
</comment>
<comment type="subcellular location">
    <subcellularLocation>
        <location evidence="1">Host nucleus</location>
        <location evidence="1">Host nucleolus</location>
    </subcellularLocation>
    <subcellularLocation>
        <location evidence="1">Host cytoplasm</location>
    </subcellularLocation>
    <subcellularLocation>
        <location evidence="1">Secreted</location>
    </subcellularLocation>
    <text evidence="1">Probably localizes to both nuclear and nucleolar compartments. Nuclear localization is mediated through the interaction of the nuclear localization signal with importin KPNB1. Secretion occurs through a Golgi-independent pathway. Tat is released from infected cells to the extracellular space where it remains associated to the cell membrane, or is secreted into the cerebrospinal fluid and sera. Extracellular Tat can be endocytosed by surrounding uninfected cells via binding to several receptors depending on the cell type.</text>
</comment>
<comment type="alternative products">
    <event type="alternative splicing"/>
    <isoform>
        <id>P04609-1</id>
        <name>Long</name>
        <sequence type="displayed"/>
    </isoform>
    <isoform>
        <id>P04609-2</id>
        <name>Short</name>
        <sequence type="described" ref="VSP_022436"/>
    </isoform>
</comment>
<comment type="domain">
    <text evidence="1">The cell attachment site mediates the interaction with ITGAV/ITGB3 and ITGA5/ITGB1 integrins, leading to vascular cell migration and invasion. This interaction also provides endothelial cells with the adhesion signal they require to grow in response to mitogens.</text>
</comment>
<comment type="domain">
    <text evidence="1">The Cys-rich region may bind 2 zinc ions. This region is involved in binding to KAT5.</text>
</comment>
<comment type="domain">
    <text evidence="1">The transactivation domain mediates the interaction with CCNT1, GCN5L2, and MDM2.</text>
</comment>
<comment type="domain">
    <text>The Arg-rich RNA-binding region binds the TAR RNA. This region also mediates the nuclear localization through direct binding to KPNB1 and is involved in Tat's transfer across cell membranes (protein transduction). The same region is required for the interaction with EP300, PCAF, EIF2AK2 and KDR.</text>
</comment>
<comment type="PTM">
    <text evidence="1">Asymmetrical arginine methylation by host PRMT6 seems to diminish the transactivation capacity of Tat and affects the interaction with host CCNT1.</text>
</comment>
<comment type="PTM">
    <text evidence="1">Acetylation by EP300, CREBBP, GCN5L2/GCN5 and PCAF regulates the transactivation activity of Tat. EP300-mediated acetylation of Lys-50 promotes dissociation of Tat from the TAR RNA through the competitive binding to PCAF's bromodomain. In addition, the non-acetylated Tat's N-terminus can also interact with PCAF. PCAF-mediated acetylation of Lys-28 enhances Tat's binding to CCNT1. Lys-50 is deacetylated by SIRT1.</text>
</comment>
<comment type="PTM">
    <text evidence="1">Polyubiquitination by host MDM2 does not target Tat to degradation, but activates its transactivation function and fosters interaction with CCNT1 and TAR RNA.</text>
</comment>
<comment type="PTM">
    <text evidence="1">Phosphorylated by EIF2AK2 on serine and threonine residues adjacent to the basic region important for TAR RNA binding and function. Phosphorylation of Tat by EIF2AK2 is dependent on the prior activation of EIF2AK2 by dsRNA.</text>
</comment>
<comment type="miscellaneous">
    <text evidence="1">This truncated variant has a premature stop codon. It may have arose as a consequence of tissue culture passaging.</text>
</comment>
<comment type="miscellaneous">
    <text evidence="1">HIV-1 lineages are divided in three main groups, M (for Major), O (for Outlier), and N (for New, or Non-M, Non-O). The vast majority of strains found worldwide belong to the group M. Group O seems to be endemic to and largely confined to Cameroon and neighboring countries in West Central Africa, where these viruses represent a small minority of HIV-1 strains. The group N is represented by a limited number of isolates from Cameroonian persons. The group M is further subdivided in 9 clades or subtypes (A to D, F to H, J and K).</text>
</comment>
<comment type="miscellaneous">
    <molecule>Isoform Short</molecule>
    <text evidence="3">Expressed in the late stage of the infection cycle, when unspliced viral RNAs are exported to the cytoplasm by the viral Rev protein.</text>
</comment>
<comment type="similarity">
    <text evidence="1">Belongs to the lentiviruses Tat family.</text>
</comment>
<protein>
    <recommendedName>
        <fullName evidence="1">Protein Tat</fullName>
    </recommendedName>
    <alternativeName>
        <fullName evidence="1">Transactivating regulatory protein</fullName>
    </alternativeName>
</protein>
<dbReference type="EMBL" id="K03458">
    <property type="protein sequence ID" value="AAA45377.1"/>
    <property type="molecule type" value="Genomic_RNA"/>
</dbReference>
<dbReference type="PIR" id="C26192">
    <property type="entry name" value="TNLJZR"/>
</dbReference>
<dbReference type="SMR" id="P04609"/>
<dbReference type="Reactome" id="R-HSA-9833482">
    <property type="pathway name" value="PKR-mediated signaling"/>
</dbReference>
<dbReference type="GO" id="GO:0005576">
    <property type="term" value="C:extracellular region"/>
    <property type="evidence" value="ECO:0007669"/>
    <property type="project" value="UniProtKB-SubCell"/>
</dbReference>
<dbReference type="GO" id="GO:0030430">
    <property type="term" value="C:host cell cytoplasm"/>
    <property type="evidence" value="ECO:0007669"/>
    <property type="project" value="UniProtKB-SubCell"/>
</dbReference>
<dbReference type="GO" id="GO:0044196">
    <property type="term" value="C:host cell nucleolus"/>
    <property type="evidence" value="ECO:0007669"/>
    <property type="project" value="UniProtKB-SubCell"/>
</dbReference>
<dbReference type="GO" id="GO:0042805">
    <property type="term" value="F:actinin binding"/>
    <property type="evidence" value="ECO:0007669"/>
    <property type="project" value="UniProtKB-UniRule"/>
</dbReference>
<dbReference type="GO" id="GO:0030332">
    <property type="term" value="F:cyclin binding"/>
    <property type="evidence" value="ECO:0007669"/>
    <property type="project" value="UniProtKB-UniRule"/>
</dbReference>
<dbReference type="GO" id="GO:0046872">
    <property type="term" value="F:metal ion binding"/>
    <property type="evidence" value="ECO:0007669"/>
    <property type="project" value="UniProtKB-UniRule"/>
</dbReference>
<dbReference type="GO" id="GO:0019904">
    <property type="term" value="F:protein domain specific binding"/>
    <property type="evidence" value="ECO:0007669"/>
    <property type="project" value="UniProtKB-UniRule"/>
</dbReference>
<dbReference type="GO" id="GO:0004865">
    <property type="term" value="F:protein serine/threonine phosphatase inhibitor activity"/>
    <property type="evidence" value="ECO:0007669"/>
    <property type="project" value="UniProtKB-KW"/>
</dbReference>
<dbReference type="GO" id="GO:0001070">
    <property type="term" value="F:RNA-binding transcription regulator activity"/>
    <property type="evidence" value="ECO:0007669"/>
    <property type="project" value="UniProtKB-UniRule"/>
</dbReference>
<dbReference type="GO" id="GO:1990970">
    <property type="term" value="F:trans-activation response element binding"/>
    <property type="evidence" value="ECO:0007669"/>
    <property type="project" value="UniProtKB-UniRule"/>
</dbReference>
<dbReference type="GO" id="GO:0006351">
    <property type="term" value="P:DNA-templated transcription"/>
    <property type="evidence" value="ECO:0007669"/>
    <property type="project" value="UniProtKB-UniRule"/>
</dbReference>
<dbReference type="GO" id="GO:0032968">
    <property type="term" value="P:positive regulation of transcription elongation by RNA polymerase II"/>
    <property type="evidence" value="ECO:0007669"/>
    <property type="project" value="UniProtKB-UniRule"/>
</dbReference>
<dbReference type="GO" id="GO:0050434">
    <property type="term" value="P:positive regulation of viral transcription"/>
    <property type="evidence" value="ECO:0007669"/>
    <property type="project" value="UniProtKB-UniRule"/>
</dbReference>
<dbReference type="GO" id="GO:0039525">
    <property type="term" value="P:symbiont-mediated perturbation of host chromatin organization"/>
    <property type="evidence" value="ECO:0007669"/>
    <property type="project" value="UniProtKB-UniRule"/>
</dbReference>
<dbReference type="GO" id="GO:0052170">
    <property type="term" value="P:symbiont-mediated suppression of host innate immune response"/>
    <property type="evidence" value="ECO:0007669"/>
    <property type="project" value="UniProtKB-KW"/>
</dbReference>
<dbReference type="GO" id="GO:0039606">
    <property type="term" value="P:symbiont-mediated suppression of host translation initiation"/>
    <property type="evidence" value="ECO:0007669"/>
    <property type="project" value="UniProtKB-KW"/>
</dbReference>
<dbReference type="GO" id="GO:0039502">
    <property type="term" value="P:symbiont-mediated suppression of host type I interferon-mediated signaling pathway"/>
    <property type="evidence" value="ECO:0007669"/>
    <property type="project" value="UniProtKB-UniRule"/>
</dbReference>
<dbReference type="Gene3D" id="4.10.20.10">
    <property type="entry name" value="Tat domain"/>
    <property type="match status" value="1"/>
</dbReference>
<dbReference type="HAMAP" id="MF_04079">
    <property type="entry name" value="HIV_TAT"/>
    <property type="match status" value="1"/>
</dbReference>
<dbReference type="InterPro" id="IPR001831">
    <property type="entry name" value="IV_Tat"/>
</dbReference>
<dbReference type="InterPro" id="IPR036963">
    <property type="entry name" value="Tat_dom_sf"/>
</dbReference>
<dbReference type="Pfam" id="PF00539">
    <property type="entry name" value="Tat"/>
    <property type="match status" value="1"/>
</dbReference>
<dbReference type="PRINTS" id="PR00055">
    <property type="entry name" value="HIVTATDOMAIN"/>
</dbReference>
<organismHost>
    <name type="scientific">Homo sapiens</name>
    <name type="common">Human</name>
    <dbReference type="NCBI Taxonomy" id="9606"/>
</organismHost>
<evidence type="ECO:0000255" key="1">
    <source>
        <dbReference type="HAMAP-Rule" id="MF_04079"/>
    </source>
</evidence>
<evidence type="ECO:0000256" key="2">
    <source>
        <dbReference type="SAM" id="MobiDB-lite"/>
    </source>
</evidence>
<evidence type="ECO:0000305" key="3"/>
<sequence length="86" mass="9736">MDPVDPNLEPWNHPGSQPKTACNRCHCKKCCYHCQVCFITKGLGISYGRKKRRQRRRPSQGGQTHQDPIPKQPSSQPRGNPTGPKE</sequence>
<accession>P04609</accession>
<feature type="chain" id="PRO_0000085365" description="Protein Tat">
    <location>
        <begin position="1"/>
        <end position="86"/>
    </location>
</feature>
<feature type="region of interest" description="Transactivation" evidence="1">
    <location>
        <begin position="1"/>
        <end position="48"/>
    </location>
</feature>
<feature type="region of interest" description="Interaction with human CREBBP" evidence="1">
    <location>
        <begin position="1"/>
        <end position="24"/>
    </location>
</feature>
<feature type="region of interest" description="Disordered" evidence="2">
    <location>
        <begin position="1"/>
        <end position="21"/>
    </location>
</feature>
<feature type="region of interest" description="Cysteine-rich" evidence="1">
    <location>
        <begin position="22"/>
        <end position="37"/>
    </location>
</feature>
<feature type="region of interest" description="Core" evidence="1">
    <location>
        <begin position="38"/>
        <end position="48"/>
    </location>
</feature>
<feature type="region of interest" description="Disordered" evidence="2">
    <location>
        <begin position="47"/>
        <end position="86"/>
    </location>
</feature>
<feature type="region of interest" description="Interaction with the host capping enzyme RNGTT" evidence="1">
    <location>
        <begin position="49"/>
        <end position="86"/>
    </location>
</feature>
<feature type="short sequence motif" description="Nuclear localization signal, RNA-binding (TAR), and protein transduction" evidence="1">
    <location>
        <begin position="49"/>
        <end position="57"/>
    </location>
</feature>
<feature type="compositionally biased region" description="Basic residues" evidence="2">
    <location>
        <begin position="48"/>
        <end position="58"/>
    </location>
</feature>
<feature type="compositionally biased region" description="Polar residues" evidence="2">
    <location>
        <begin position="60"/>
        <end position="79"/>
    </location>
</feature>
<feature type="binding site" evidence="1">
    <location>
        <position position="22"/>
    </location>
    <ligand>
        <name>Zn(2+)</name>
        <dbReference type="ChEBI" id="CHEBI:29105"/>
        <label>1</label>
    </ligand>
</feature>
<feature type="binding site" evidence="1">
    <location>
        <position position="25"/>
    </location>
    <ligand>
        <name>Zn(2+)</name>
        <dbReference type="ChEBI" id="CHEBI:29105"/>
        <label>2</label>
    </ligand>
</feature>
<feature type="binding site" evidence="1">
    <location>
        <position position="27"/>
    </location>
    <ligand>
        <name>Zn(2+)</name>
        <dbReference type="ChEBI" id="CHEBI:29105"/>
        <label>2</label>
    </ligand>
</feature>
<feature type="binding site" evidence="1">
    <location>
        <position position="30"/>
    </location>
    <ligand>
        <name>Zn(2+)</name>
        <dbReference type="ChEBI" id="CHEBI:29105"/>
        <label>2</label>
    </ligand>
</feature>
<feature type="binding site" evidence="1">
    <location>
        <position position="33"/>
    </location>
    <ligand>
        <name>Zn(2+)</name>
        <dbReference type="ChEBI" id="CHEBI:29105"/>
        <label>1</label>
    </ligand>
</feature>
<feature type="binding site" evidence="1">
    <location>
        <position position="34"/>
    </location>
    <ligand>
        <name>Zn(2+)</name>
        <dbReference type="ChEBI" id="CHEBI:29105"/>
        <label>1</label>
    </ligand>
</feature>
<feature type="binding site" evidence="1">
    <location>
        <position position="37"/>
    </location>
    <ligand>
        <name>Zn(2+)</name>
        <dbReference type="ChEBI" id="CHEBI:29105"/>
        <label>1</label>
    </ligand>
</feature>
<feature type="site" description="Essential for Tat translocation through the endosomal membrane" evidence="1">
    <location>
        <position position="11"/>
    </location>
</feature>
<feature type="modified residue" description="N6-acetyllysine; by host PCAF" evidence="1">
    <location>
        <position position="28"/>
    </location>
</feature>
<feature type="modified residue" description="N6-acetyllysine; by host EP300 and GCN5L2" evidence="1">
    <location>
        <position position="50"/>
    </location>
</feature>
<feature type="modified residue" description="N6-acetyllysine; by host EP300 and GCN5L2" evidence="1">
    <location>
        <position position="51"/>
    </location>
</feature>
<feature type="modified residue" description="Asymmetric dimethylarginine; by host PRMT6" evidence="1">
    <location>
        <position position="52"/>
    </location>
</feature>
<feature type="modified residue" description="Asymmetric dimethylarginine; by host PRMT6" evidence="1">
    <location>
        <position position="53"/>
    </location>
</feature>
<feature type="cross-link" description="Glycyl lysine isopeptide (Lys-Gly) (interchain with G-Cter in ubiquitin)" evidence="1">
    <location>
        <position position="71"/>
    </location>
</feature>
<feature type="splice variant" id="VSP_022436" description="In isoform Short.">
    <location>
        <begin position="73"/>
        <end position="86"/>
    </location>
</feature>
<reference key="1">
    <citation type="journal article" date="1987" name="Gene">
        <title>Molecular characterization of human immunodeficiency virus from Zaire: nucleotide sequence analysis identifies conserved and variable domains in the envelope gene.</title>
        <authorList>
            <person name="Srinivasan A."/>
            <person name="Anand R."/>
            <person name="York D."/>
            <person name="Ranganathan P."/>
            <person name="Feorino P."/>
            <person name="Schochetman G."/>
            <person name="Curran J."/>
            <person name="Kalyanaraman V.S."/>
            <person name="Luciw P.A."/>
            <person name="Sanchez-Pescador R."/>
        </authorList>
    </citation>
    <scope>NUCLEOTIDE SEQUENCE [GENOMIC RNA]</scope>
</reference>
<reference key="2">
    <citation type="journal article" date="2005" name="Microbes Infect.">
        <title>Decoding Tat: the biology of HIV Tat posttranslational modifications.</title>
        <authorList>
            <person name="Hetzer C."/>
            <person name="Dormeyer W."/>
            <person name="Schnolzer M."/>
            <person name="Ott M."/>
        </authorList>
    </citation>
    <scope>REVIEW</scope>
    <scope>ALTERNATIVE SPLICING</scope>
</reference>
<reference key="3">
    <citation type="journal article" date="2006" name="Front. Biosci.">
        <title>The multiple functions of HIV-1 Tat: proliferation versus apoptosis.</title>
        <authorList>
            <person name="Peruzzi F."/>
        </authorList>
    </citation>
    <scope>REVIEW</scope>
</reference>
<reference key="4">
    <citation type="journal article" date="2006" name="Microbes Infect.">
        <title>HIV tat and neurotoxicity.</title>
        <authorList>
            <person name="King J.E."/>
            <person name="Eugenin E.A."/>
            <person name="Buckner C.M."/>
            <person name="Berman J.W."/>
        </authorList>
    </citation>
    <scope>REVIEW</scope>
</reference>
<proteinExistence type="inferred from homology"/>
<name>TAT_HV1Z6</name>
<gene>
    <name evidence="1" type="primary">tat</name>
</gene>
<keyword id="KW-0007">Acetylation</keyword>
<keyword id="KW-0010">Activator</keyword>
<keyword id="KW-0014">AIDS</keyword>
<keyword id="KW-0025">Alternative splicing</keyword>
<keyword id="KW-0053">Apoptosis</keyword>
<keyword id="KW-1035">Host cytoplasm</keyword>
<keyword id="KW-1048">Host nucleus</keyword>
<keyword id="KW-0945">Host-virus interaction</keyword>
<keyword id="KW-1090">Inhibition of host innate immune response by virus</keyword>
<keyword id="KW-1114">Inhibition of host interferon signaling pathway by virus</keyword>
<keyword id="KW-0922">Interferon antiviral system evasion</keyword>
<keyword id="KW-1017">Isopeptide bond</keyword>
<keyword id="KW-0479">Metal-binding</keyword>
<keyword id="KW-0488">Methylation</keyword>
<keyword id="KW-1122">Modulation of host chromatin by virus</keyword>
<keyword id="KW-1126">Modulation of host PP1 activity by virus</keyword>
<keyword id="KW-0597">Phosphoprotein</keyword>
<keyword id="KW-0694">RNA-binding</keyword>
<keyword id="KW-0964">Secreted</keyword>
<keyword id="KW-0804">Transcription</keyword>
<keyword id="KW-0805">Transcription regulation</keyword>
<keyword id="KW-0832">Ubl conjugation</keyword>
<keyword id="KW-0899">Viral immunoevasion</keyword>
<keyword id="KW-0862">Zinc</keyword>
<organism>
    <name type="scientific">Human immunodeficiency virus type 1 group M subtype D (isolate Z6)</name>
    <name type="common">HIV-1</name>
    <dbReference type="NCBI Taxonomy" id="11708"/>
    <lineage>
        <taxon>Viruses</taxon>
        <taxon>Riboviria</taxon>
        <taxon>Pararnavirae</taxon>
        <taxon>Artverviricota</taxon>
        <taxon>Revtraviricetes</taxon>
        <taxon>Ortervirales</taxon>
        <taxon>Retroviridae</taxon>
        <taxon>Orthoretrovirinae</taxon>
        <taxon>Lentivirus</taxon>
        <taxon>Human immunodeficiency virus type 1</taxon>
    </lineage>
</organism>